<feature type="chain" id="PRO_1000053676" description="Uracil phosphoribosyltransferase">
    <location>
        <begin position="1"/>
        <end position="209"/>
    </location>
</feature>
<feature type="binding site" evidence="1">
    <location>
        <position position="79"/>
    </location>
    <ligand>
        <name>5-phospho-alpha-D-ribose 1-diphosphate</name>
        <dbReference type="ChEBI" id="CHEBI:58017"/>
    </ligand>
</feature>
<feature type="binding site" evidence="1">
    <location>
        <position position="104"/>
    </location>
    <ligand>
        <name>5-phospho-alpha-D-ribose 1-diphosphate</name>
        <dbReference type="ChEBI" id="CHEBI:58017"/>
    </ligand>
</feature>
<feature type="binding site" evidence="1">
    <location>
        <begin position="131"/>
        <end position="139"/>
    </location>
    <ligand>
        <name>5-phospho-alpha-D-ribose 1-diphosphate</name>
        <dbReference type="ChEBI" id="CHEBI:58017"/>
    </ligand>
</feature>
<feature type="binding site" evidence="1">
    <location>
        <position position="194"/>
    </location>
    <ligand>
        <name>uracil</name>
        <dbReference type="ChEBI" id="CHEBI:17568"/>
    </ligand>
</feature>
<feature type="binding site" evidence="1">
    <location>
        <begin position="199"/>
        <end position="201"/>
    </location>
    <ligand>
        <name>uracil</name>
        <dbReference type="ChEBI" id="CHEBI:17568"/>
    </ligand>
</feature>
<feature type="binding site" evidence="1">
    <location>
        <position position="200"/>
    </location>
    <ligand>
        <name>5-phospho-alpha-D-ribose 1-diphosphate</name>
        <dbReference type="ChEBI" id="CHEBI:58017"/>
    </ligand>
</feature>
<evidence type="ECO:0000255" key="1">
    <source>
        <dbReference type="HAMAP-Rule" id="MF_01218"/>
    </source>
</evidence>
<comment type="function">
    <text evidence="1">Catalyzes the conversion of uracil and 5-phospho-alpha-D-ribose 1-diphosphate (PRPP) to UMP and diphosphate.</text>
</comment>
<comment type="catalytic activity">
    <reaction evidence="1">
        <text>UMP + diphosphate = 5-phospho-alpha-D-ribose 1-diphosphate + uracil</text>
        <dbReference type="Rhea" id="RHEA:13017"/>
        <dbReference type="ChEBI" id="CHEBI:17568"/>
        <dbReference type="ChEBI" id="CHEBI:33019"/>
        <dbReference type="ChEBI" id="CHEBI:57865"/>
        <dbReference type="ChEBI" id="CHEBI:58017"/>
        <dbReference type="EC" id="2.4.2.9"/>
    </reaction>
</comment>
<comment type="cofactor">
    <cofactor evidence="1">
        <name>Mg(2+)</name>
        <dbReference type="ChEBI" id="CHEBI:18420"/>
    </cofactor>
    <text evidence="1">Binds 1 Mg(2+) ion per subunit. The magnesium is bound as Mg-PRPP.</text>
</comment>
<comment type="activity regulation">
    <text evidence="1">Allosterically activated by GTP.</text>
</comment>
<comment type="pathway">
    <text evidence="1">Pyrimidine metabolism; UMP biosynthesis via salvage pathway; UMP from uracil: step 1/1.</text>
</comment>
<comment type="similarity">
    <text evidence="1">Belongs to the UPRTase family.</text>
</comment>
<name>UPP_BACAH</name>
<gene>
    <name evidence="1" type="primary">upp</name>
    <name type="ordered locus">BALH_4815</name>
</gene>
<sequence length="209" mass="22902">MGKLYVFDHPLIQHKITYIRDKNTGTKDFRELVDEVASLMAFEITRDLPLEDIEIETPVSKATTKVIAGKKLGLIPILRAGLGMVDGILKLIPAAKVGHVGLYRDPKTLQPVEYYVKLPTDVEERDFIVLDPMLATGGSAAEAINSLKKRGAKQIKLMCIVAAPEGVKVVQEEHPDVDIYVAALDEKLNDHGYVVPGLGDAGDRLFGTK</sequence>
<keyword id="KW-0021">Allosteric enzyme</keyword>
<keyword id="KW-0328">Glycosyltransferase</keyword>
<keyword id="KW-0342">GTP-binding</keyword>
<keyword id="KW-0460">Magnesium</keyword>
<keyword id="KW-0547">Nucleotide-binding</keyword>
<keyword id="KW-0808">Transferase</keyword>
<accession>A0RLA2</accession>
<reference key="1">
    <citation type="journal article" date="2007" name="J. Bacteriol.">
        <title>The complete genome sequence of Bacillus thuringiensis Al Hakam.</title>
        <authorList>
            <person name="Challacombe J.F."/>
            <person name="Altherr M.R."/>
            <person name="Xie G."/>
            <person name="Bhotika S.S."/>
            <person name="Brown N."/>
            <person name="Bruce D."/>
            <person name="Campbell C.S."/>
            <person name="Campbell M.L."/>
            <person name="Chen J."/>
            <person name="Chertkov O."/>
            <person name="Cleland C."/>
            <person name="Dimitrijevic M."/>
            <person name="Doggett N.A."/>
            <person name="Fawcett J.J."/>
            <person name="Glavina T."/>
            <person name="Goodwin L.A."/>
            <person name="Green L.D."/>
            <person name="Han C.S."/>
            <person name="Hill K.K."/>
            <person name="Hitchcock P."/>
            <person name="Jackson P.J."/>
            <person name="Keim P."/>
            <person name="Kewalramani A.R."/>
            <person name="Longmire J."/>
            <person name="Lucas S."/>
            <person name="Malfatti S."/>
            <person name="Martinez D."/>
            <person name="McMurry K."/>
            <person name="Meincke L.J."/>
            <person name="Misra M."/>
            <person name="Moseman B.L."/>
            <person name="Mundt M."/>
            <person name="Munk A.C."/>
            <person name="Okinaka R.T."/>
            <person name="Parson-Quintana B."/>
            <person name="Reilly L.P."/>
            <person name="Richardson P."/>
            <person name="Robinson D.L."/>
            <person name="Saunders E."/>
            <person name="Tapia R."/>
            <person name="Tesmer J.G."/>
            <person name="Thayer N."/>
            <person name="Thompson L.S."/>
            <person name="Tice H."/>
            <person name="Ticknor L.O."/>
            <person name="Wills P.L."/>
            <person name="Gilna P."/>
            <person name="Brettin T.S."/>
        </authorList>
    </citation>
    <scope>NUCLEOTIDE SEQUENCE [LARGE SCALE GENOMIC DNA]</scope>
    <source>
        <strain>Al Hakam</strain>
    </source>
</reference>
<proteinExistence type="inferred from homology"/>
<dbReference type="EC" id="2.4.2.9" evidence="1"/>
<dbReference type="EMBL" id="CP000485">
    <property type="protein sequence ID" value="ABK87995.1"/>
    <property type="molecule type" value="Genomic_DNA"/>
</dbReference>
<dbReference type="RefSeq" id="WP_000517533.1">
    <property type="nucleotide sequence ID" value="NC_008600.1"/>
</dbReference>
<dbReference type="SMR" id="A0RLA2"/>
<dbReference type="GeneID" id="66265129"/>
<dbReference type="KEGG" id="btl:BALH_4815"/>
<dbReference type="HOGENOM" id="CLU_067096_2_2_9"/>
<dbReference type="UniPathway" id="UPA00574">
    <property type="reaction ID" value="UER00636"/>
</dbReference>
<dbReference type="GO" id="GO:0005525">
    <property type="term" value="F:GTP binding"/>
    <property type="evidence" value="ECO:0007669"/>
    <property type="project" value="UniProtKB-KW"/>
</dbReference>
<dbReference type="GO" id="GO:0000287">
    <property type="term" value="F:magnesium ion binding"/>
    <property type="evidence" value="ECO:0007669"/>
    <property type="project" value="UniProtKB-UniRule"/>
</dbReference>
<dbReference type="GO" id="GO:0004845">
    <property type="term" value="F:uracil phosphoribosyltransferase activity"/>
    <property type="evidence" value="ECO:0007669"/>
    <property type="project" value="UniProtKB-UniRule"/>
</dbReference>
<dbReference type="GO" id="GO:0044206">
    <property type="term" value="P:UMP salvage"/>
    <property type="evidence" value="ECO:0007669"/>
    <property type="project" value="UniProtKB-UniRule"/>
</dbReference>
<dbReference type="GO" id="GO:0006223">
    <property type="term" value="P:uracil salvage"/>
    <property type="evidence" value="ECO:0007669"/>
    <property type="project" value="InterPro"/>
</dbReference>
<dbReference type="CDD" id="cd06223">
    <property type="entry name" value="PRTases_typeI"/>
    <property type="match status" value="1"/>
</dbReference>
<dbReference type="FunFam" id="3.40.50.2020:FF:000003">
    <property type="entry name" value="Uracil phosphoribosyltransferase"/>
    <property type="match status" value="1"/>
</dbReference>
<dbReference type="Gene3D" id="3.40.50.2020">
    <property type="match status" value="1"/>
</dbReference>
<dbReference type="HAMAP" id="MF_01218_B">
    <property type="entry name" value="Upp_B"/>
    <property type="match status" value="1"/>
</dbReference>
<dbReference type="InterPro" id="IPR000836">
    <property type="entry name" value="PRibTrfase_dom"/>
</dbReference>
<dbReference type="InterPro" id="IPR029057">
    <property type="entry name" value="PRTase-like"/>
</dbReference>
<dbReference type="InterPro" id="IPR034332">
    <property type="entry name" value="Upp_B"/>
</dbReference>
<dbReference type="InterPro" id="IPR050054">
    <property type="entry name" value="UPRTase/APRTase"/>
</dbReference>
<dbReference type="InterPro" id="IPR005765">
    <property type="entry name" value="Ura_phspho_trans"/>
</dbReference>
<dbReference type="NCBIfam" id="NF001097">
    <property type="entry name" value="PRK00129.1"/>
    <property type="match status" value="1"/>
</dbReference>
<dbReference type="NCBIfam" id="TIGR01091">
    <property type="entry name" value="upp"/>
    <property type="match status" value="1"/>
</dbReference>
<dbReference type="PANTHER" id="PTHR32315">
    <property type="entry name" value="ADENINE PHOSPHORIBOSYLTRANSFERASE"/>
    <property type="match status" value="1"/>
</dbReference>
<dbReference type="PANTHER" id="PTHR32315:SF4">
    <property type="entry name" value="URACIL PHOSPHORIBOSYLTRANSFERASE, CHLOROPLASTIC"/>
    <property type="match status" value="1"/>
</dbReference>
<dbReference type="Pfam" id="PF14681">
    <property type="entry name" value="UPRTase"/>
    <property type="match status" value="1"/>
</dbReference>
<dbReference type="SUPFAM" id="SSF53271">
    <property type="entry name" value="PRTase-like"/>
    <property type="match status" value="1"/>
</dbReference>
<protein>
    <recommendedName>
        <fullName evidence="1">Uracil phosphoribosyltransferase</fullName>
        <ecNumber evidence="1">2.4.2.9</ecNumber>
    </recommendedName>
    <alternativeName>
        <fullName evidence="1">UMP pyrophosphorylase</fullName>
    </alternativeName>
    <alternativeName>
        <fullName evidence="1">UPRTase</fullName>
    </alternativeName>
</protein>
<organism>
    <name type="scientific">Bacillus thuringiensis (strain Al Hakam)</name>
    <dbReference type="NCBI Taxonomy" id="412694"/>
    <lineage>
        <taxon>Bacteria</taxon>
        <taxon>Bacillati</taxon>
        <taxon>Bacillota</taxon>
        <taxon>Bacilli</taxon>
        <taxon>Bacillales</taxon>
        <taxon>Bacillaceae</taxon>
        <taxon>Bacillus</taxon>
        <taxon>Bacillus cereus group</taxon>
    </lineage>
</organism>